<name>TT39B_XENLA</name>
<evidence type="ECO:0000250" key="1">
    <source>
        <dbReference type="UniProtKB" id="Q8BYY4"/>
    </source>
</evidence>
<evidence type="ECO:0000305" key="2"/>
<feature type="chain" id="PRO_0000292003" description="Tetratricopeptide repeat protein 39B">
    <location>
        <begin position="1"/>
        <end position="586"/>
    </location>
</feature>
<feature type="repeat" description="TPR 1">
    <location>
        <begin position="292"/>
        <end position="325"/>
    </location>
</feature>
<feature type="repeat" description="TPR 2">
    <location>
        <begin position="483"/>
        <end position="516"/>
    </location>
</feature>
<feature type="repeat" description="TPR 3">
    <location>
        <begin position="524"/>
        <end position="557"/>
    </location>
</feature>
<sequence length="586" mass="66820">MAFVSNGTEADEEGFEDAYENIPVASKMDLRCALEECTMALNLFLNNKFSEALELLRPWAKESIYHALGYSTILVMQSAMTFEPQDVQMGITTMKEALQTCQRFRKRNTVVESLSNLVSKQSGDQLTEEEMHAEICYAECLLQKAALTFVQDENMINFIKGGIKIRTSYQIYKECHQMYSLAASQGKMCSDTHYQFEGGVKLGIGAFNLMLSLLPSRVLRLLEFIGFSGNRELGLSQLREGASGSSIRAILCVLTLLFYHTYISLILGTGEANLEEAEALLEPYLKKFPNGSIILFYAARIDILKGRFEQAQETFQKCIVSQQEWKQIHHLCYWELMWCHSFQQDWLQAYRYADLLSKESKWSKATYVFQKAALLSMLPEDVVKTTGEDIVALFRQVESLKQRIAGKSIPTEKFAVRKSRRYISDNPVKLTLPALEMMYVWNGFTIVGKRADLTENVLVTIEKAEVALQNETKVTEYLADDLCLVQLLKGVCLKHLGRLLQAELCFNQVIQSEKRVKYDHYLIPFTFYELGLLYKEQGDRDKAIRYIETAKGNYKDYSLESRLHFRIHAALSSLKGSPVSTPTTPS</sequence>
<protein>
    <recommendedName>
        <fullName>Tetratricopeptide repeat protein 39B</fullName>
        <shortName>TPR repeat protein 39B</shortName>
    </recommendedName>
</protein>
<keyword id="KW-0443">Lipid metabolism</keyword>
<keyword id="KW-1185">Reference proteome</keyword>
<keyword id="KW-0677">Repeat</keyword>
<keyword id="KW-0802">TPR repeat</keyword>
<dbReference type="EMBL" id="BC084078">
    <property type="protein sequence ID" value="AAH84078.1"/>
    <property type="molecule type" value="mRNA"/>
</dbReference>
<dbReference type="RefSeq" id="NP_001088170.1">
    <property type="nucleotide sequence ID" value="NM_001094701.1"/>
</dbReference>
<dbReference type="DNASU" id="494994"/>
<dbReference type="GeneID" id="494994"/>
<dbReference type="KEGG" id="xla:494994"/>
<dbReference type="AGR" id="Xenbase:XB-GENE-1016441"/>
<dbReference type="CTD" id="494994"/>
<dbReference type="Xenbase" id="XB-GENE-1016441">
    <property type="gene designation" value="ttc39b.L"/>
</dbReference>
<dbReference type="OMA" id="ELMWAHC"/>
<dbReference type="OrthoDB" id="43460at2759"/>
<dbReference type="Proteomes" id="UP000186698">
    <property type="component" value="Chromosome 1L"/>
</dbReference>
<dbReference type="Bgee" id="494994">
    <property type="expression patterns" value="Expressed in camera-type eye and 19 other cell types or tissues"/>
</dbReference>
<dbReference type="GO" id="GO:0006629">
    <property type="term" value="P:lipid metabolic process"/>
    <property type="evidence" value="ECO:0007669"/>
    <property type="project" value="UniProtKB-KW"/>
</dbReference>
<dbReference type="Gene3D" id="1.25.40.10">
    <property type="entry name" value="Tetratricopeptide repeat domain"/>
    <property type="match status" value="2"/>
</dbReference>
<dbReference type="InterPro" id="IPR019412">
    <property type="entry name" value="Iml2/TPR_39"/>
</dbReference>
<dbReference type="InterPro" id="IPR011990">
    <property type="entry name" value="TPR-like_helical_dom_sf"/>
</dbReference>
<dbReference type="InterPro" id="IPR019734">
    <property type="entry name" value="TPR_rpt"/>
</dbReference>
<dbReference type="PANTHER" id="PTHR31859">
    <property type="entry name" value="TETRATRICOPEPTIDE REPEAT PROTEIN 39 FAMILY MEMBER"/>
    <property type="match status" value="1"/>
</dbReference>
<dbReference type="PANTHER" id="PTHR31859:SF4">
    <property type="entry name" value="TETRATRICOPEPTIDE REPEAT PROTEIN 39B"/>
    <property type="match status" value="1"/>
</dbReference>
<dbReference type="Pfam" id="PF10300">
    <property type="entry name" value="Iml2-TPR_39"/>
    <property type="match status" value="1"/>
</dbReference>
<dbReference type="Pfam" id="PF13181">
    <property type="entry name" value="TPR_8"/>
    <property type="match status" value="1"/>
</dbReference>
<dbReference type="SMART" id="SM00028">
    <property type="entry name" value="TPR"/>
    <property type="match status" value="3"/>
</dbReference>
<dbReference type="SUPFAM" id="SSF48452">
    <property type="entry name" value="TPR-like"/>
    <property type="match status" value="1"/>
</dbReference>
<reference key="1">
    <citation type="submission" date="2004-10" db="EMBL/GenBank/DDBJ databases">
        <authorList>
            <consortium name="NIH - Xenopus Gene Collection (XGC) project"/>
        </authorList>
    </citation>
    <scope>NUCLEOTIDE SEQUENCE [LARGE SCALE MRNA]</scope>
    <source>
        <tissue>Embryo</tissue>
    </source>
</reference>
<accession>Q5XHH9</accession>
<organism>
    <name type="scientific">Xenopus laevis</name>
    <name type="common">African clawed frog</name>
    <dbReference type="NCBI Taxonomy" id="8355"/>
    <lineage>
        <taxon>Eukaryota</taxon>
        <taxon>Metazoa</taxon>
        <taxon>Chordata</taxon>
        <taxon>Craniata</taxon>
        <taxon>Vertebrata</taxon>
        <taxon>Euteleostomi</taxon>
        <taxon>Amphibia</taxon>
        <taxon>Batrachia</taxon>
        <taxon>Anura</taxon>
        <taxon>Pipoidea</taxon>
        <taxon>Pipidae</taxon>
        <taxon>Xenopodinae</taxon>
        <taxon>Xenopus</taxon>
        <taxon>Xenopus</taxon>
    </lineage>
</organism>
<gene>
    <name type="primary">ttc39b</name>
</gene>
<proteinExistence type="evidence at transcript level"/>
<comment type="function">
    <text evidence="1">May be involved in lipid metabolism.</text>
</comment>
<comment type="similarity">
    <text evidence="2">Belongs to the TTC39 family.</text>
</comment>